<keyword id="KW-0963">Cytoplasm</keyword>
<keyword id="KW-1185">Reference proteome</keyword>
<keyword id="KW-0690">Ribosome biogenesis</keyword>
<organism>
    <name type="scientific">Streptococcus agalactiae serotype V (strain ATCC BAA-611 / 2603 V/R)</name>
    <dbReference type="NCBI Taxonomy" id="208435"/>
    <lineage>
        <taxon>Bacteria</taxon>
        <taxon>Bacillati</taxon>
        <taxon>Bacillota</taxon>
        <taxon>Bacilli</taxon>
        <taxon>Lactobacillales</taxon>
        <taxon>Streptococcaceae</taxon>
        <taxon>Streptococcus</taxon>
    </lineage>
</organism>
<gene>
    <name evidence="1" type="primary">rimP</name>
    <name type="ordered locus">SAG0377</name>
</gene>
<evidence type="ECO:0000255" key="1">
    <source>
        <dbReference type="HAMAP-Rule" id="MF_01077"/>
    </source>
</evidence>
<evidence type="ECO:0000305" key="2"/>
<proteinExistence type="inferred from homology"/>
<comment type="function">
    <text evidence="1">Required for maturation of 30S ribosomal subunits.</text>
</comment>
<comment type="subcellular location">
    <subcellularLocation>
        <location evidence="1">Cytoplasm</location>
    </subcellularLocation>
</comment>
<comment type="similarity">
    <text evidence="1">Belongs to the RimP family.</text>
</comment>
<comment type="sequence caution" evidence="2">
    <conflict type="erroneous initiation">
        <sequence resource="EMBL-CDS" id="AAM99283"/>
    </conflict>
</comment>
<protein>
    <recommendedName>
        <fullName evidence="1">Ribosome maturation factor RimP</fullName>
    </recommendedName>
</protein>
<name>RIMP_STRA5</name>
<feature type="chain" id="PRO_0000181930" description="Ribosome maturation factor RimP">
    <location>
        <begin position="1"/>
        <end position="159"/>
    </location>
</feature>
<accession>P62599</accession>
<accession>Q8E1H7</accession>
<accession>Q8E6Z4</accession>
<reference key="1">
    <citation type="journal article" date="2002" name="Proc. Natl. Acad. Sci. U.S.A.">
        <title>Complete genome sequence and comparative genomic analysis of an emerging human pathogen, serotype V Streptococcus agalactiae.</title>
        <authorList>
            <person name="Tettelin H."/>
            <person name="Masignani V."/>
            <person name="Cieslewicz M.J."/>
            <person name="Eisen J.A."/>
            <person name="Peterson S.N."/>
            <person name="Wessels M.R."/>
            <person name="Paulsen I.T."/>
            <person name="Nelson K.E."/>
            <person name="Margarit I."/>
            <person name="Read T.D."/>
            <person name="Madoff L.C."/>
            <person name="Wolf A.M."/>
            <person name="Beanan M.J."/>
            <person name="Brinkac L.M."/>
            <person name="Daugherty S.C."/>
            <person name="DeBoy R.T."/>
            <person name="Durkin A.S."/>
            <person name="Kolonay J.F."/>
            <person name="Madupu R."/>
            <person name="Lewis M.R."/>
            <person name="Radune D."/>
            <person name="Fedorova N.B."/>
            <person name="Scanlan D."/>
            <person name="Khouri H.M."/>
            <person name="Mulligan S."/>
            <person name="Carty H.A."/>
            <person name="Cline R.T."/>
            <person name="Van Aken S.E."/>
            <person name="Gill J."/>
            <person name="Scarselli M."/>
            <person name="Mora M."/>
            <person name="Iacobini E.T."/>
            <person name="Brettoni C."/>
            <person name="Galli G."/>
            <person name="Mariani M."/>
            <person name="Vegni F."/>
            <person name="Maione D."/>
            <person name="Rinaudo D."/>
            <person name="Rappuoli R."/>
            <person name="Telford J.L."/>
            <person name="Kasper D.L."/>
            <person name="Grandi G."/>
            <person name="Fraser C.M."/>
        </authorList>
    </citation>
    <scope>NUCLEOTIDE SEQUENCE [LARGE SCALE GENOMIC DNA]</scope>
    <source>
        <strain>ATCC BAA-611 / 2603 V/R</strain>
    </source>
</reference>
<sequence>MIANQTIVDIVTQVVTPAIQAPFELVDVEYEKMGGDYVLSILIDKPGGITVEDTAQLTDVVSPLLDTIQPDPFPEQYMLEVSSPGLERPLKTAEALSNAVGSYINVSLYKSIDKVKIFEGDLLSFDGETLTIDYMDKTRHKTVDIPYQTVAKARLAVKL</sequence>
<dbReference type="EMBL" id="AE009948">
    <property type="protein sequence ID" value="AAM99283.1"/>
    <property type="status" value="ALT_INIT"/>
    <property type="molecule type" value="Genomic_DNA"/>
</dbReference>
<dbReference type="RefSeq" id="NP_687411.1">
    <property type="nucleotide sequence ID" value="NC_004116.1"/>
</dbReference>
<dbReference type="SMR" id="P62599"/>
<dbReference type="STRING" id="208435.SAG0377"/>
<dbReference type="KEGG" id="sag:SAG0377"/>
<dbReference type="PATRIC" id="fig|208435.3.peg.372"/>
<dbReference type="HOGENOM" id="CLU_070525_2_0_9"/>
<dbReference type="OrthoDB" id="9805006at2"/>
<dbReference type="Proteomes" id="UP000000821">
    <property type="component" value="Chromosome"/>
</dbReference>
<dbReference type="GO" id="GO:0005829">
    <property type="term" value="C:cytosol"/>
    <property type="evidence" value="ECO:0007669"/>
    <property type="project" value="TreeGrafter"/>
</dbReference>
<dbReference type="GO" id="GO:0000028">
    <property type="term" value="P:ribosomal small subunit assembly"/>
    <property type="evidence" value="ECO:0007669"/>
    <property type="project" value="TreeGrafter"/>
</dbReference>
<dbReference type="GO" id="GO:0006412">
    <property type="term" value="P:translation"/>
    <property type="evidence" value="ECO:0007669"/>
    <property type="project" value="TreeGrafter"/>
</dbReference>
<dbReference type="CDD" id="cd01734">
    <property type="entry name" value="YlxS_C"/>
    <property type="match status" value="1"/>
</dbReference>
<dbReference type="Gene3D" id="2.30.30.180">
    <property type="entry name" value="Ribosome maturation factor RimP, C-terminal domain"/>
    <property type="match status" value="1"/>
</dbReference>
<dbReference type="Gene3D" id="3.30.300.70">
    <property type="entry name" value="RimP-like superfamily, N-terminal"/>
    <property type="match status" value="1"/>
</dbReference>
<dbReference type="HAMAP" id="MF_01077">
    <property type="entry name" value="RimP"/>
    <property type="match status" value="1"/>
</dbReference>
<dbReference type="InterPro" id="IPR003728">
    <property type="entry name" value="Ribosome_maturation_RimP"/>
</dbReference>
<dbReference type="InterPro" id="IPR028998">
    <property type="entry name" value="RimP_C"/>
</dbReference>
<dbReference type="InterPro" id="IPR036847">
    <property type="entry name" value="RimP_C_sf"/>
</dbReference>
<dbReference type="InterPro" id="IPR028989">
    <property type="entry name" value="RimP_N"/>
</dbReference>
<dbReference type="InterPro" id="IPR035956">
    <property type="entry name" value="RimP_N_sf"/>
</dbReference>
<dbReference type="NCBIfam" id="NF000928">
    <property type="entry name" value="PRK00092.1-2"/>
    <property type="match status" value="1"/>
</dbReference>
<dbReference type="PANTHER" id="PTHR33867">
    <property type="entry name" value="RIBOSOME MATURATION FACTOR RIMP"/>
    <property type="match status" value="1"/>
</dbReference>
<dbReference type="PANTHER" id="PTHR33867:SF1">
    <property type="entry name" value="RIBOSOME MATURATION FACTOR RIMP"/>
    <property type="match status" value="1"/>
</dbReference>
<dbReference type="Pfam" id="PF17384">
    <property type="entry name" value="DUF150_C"/>
    <property type="match status" value="1"/>
</dbReference>
<dbReference type="Pfam" id="PF02576">
    <property type="entry name" value="RimP_N"/>
    <property type="match status" value="1"/>
</dbReference>
<dbReference type="SUPFAM" id="SSF74942">
    <property type="entry name" value="YhbC-like, C-terminal domain"/>
    <property type="match status" value="1"/>
</dbReference>
<dbReference type="SUPFAM" id="SSF75420">
    <property type="entry name" value="YhbC-like, N-terminal domain"/>
    <property type="match status" value="1"/>
</dbReference>